<comment type="function">
    <text evidence="1 6 7 9">RNA-binding protein that is involved in various steps of RNA biogenesis and processing. Preferentially binds, via its two RNA recognition motifs RRM1 and RRM2, to GU-repeats on RNA molecules predominantly localized within long introns and in the 3'UTR of mRNAs. In turn, regulates the splicing of many non-coding and protein-coding RNAs including proteins involved in neuronal survival, as well as mRNAs that encode proteins relevant for neurodegenerative diseases. Plays a role in maintaining mitochondrial homeostasis by regulating the processing of mitochondrial transcripts. Also regulates mRNA stability by recruiting CNOT7/CAF1 deadenylase on mRNA 3'UTR leading to poly(A) tail deadenylation and thus shortening. In response to oxidative insult, associates with stalled ribosomes localized to stress granules (SGs) and contributes to cell survival (By similarity). Also participates in the normal skeletal muscle formation and regeneration, forming cytoplasmic myo-granules and binding mRNAs that encode sarcomeric proteins (PubMed:30464263). Plays a role in the maintenance of the circadian clock periodicity via stabilization of the CRY1 and CRY2 proteins in a FBXL3-dependent manner (PubMed:27123980). Negatively regulates the expression of CDK6 (By similarity). Regulates the expression of HDAC6, ATG7 and VCP in a PPIA/CYPA-dependent manner (PubMed:25678563).</text>
</comment>
<comment type="subunit">
    <text evidence="1 4 6 7 8">Homodimer. Homooligomer (via its N-terminal domain) (By similarity). Interacts with BRDT (PubMed:22570411). Binds specifically to pyrimidine-rich motifs of TAR DNA and to single stranded TG repeated sequences. Binds to RNA, specifically to UG repeated sequences with a minimum of six contiguous repeats. Interacts with ATXN2; the interaction is RNA-dependent. Interacts with MATR3. Interacts with UBQLN2. Interacts with HNRNPA2B1 (By similarity). Interacts with ZNF106 (PubMed:28072389). Interacts with CNOT7/CAF1 (By similarity). Interacts with CRY2 (PubMed:27123980). Interacts with PPIA/CYPA; the interaction is dependent on RNA-binding activity of TARDBP and PPIase activity of PPIA/CYPA (PubMed:25678563). Acetylation of PPIA/CYPA at 'Lys-125' favors the interaction of TARDBP with PPIA/CYPA (By similarity).</text>
</comment>
<comment type="subcellular location">
    <subcellularLocation>
        <location evidence="1">Nucleus</location>
    </subcellularLocation>
    <subcellularLocation>
        <location evidence="9">Cytoplasm</location>
    </subcellularLocation>
    <subcellularLocation>
        <location evidence="1">Cytoplasm</location>
        <location evidence="1">Stress granule</location>
    </subcellularLocation>
    <subcellularLocation>
        <location evidence="1">Mitochondrion</location>
    </subcellularLocation>
    <text evidence="1">Continuously travels in and out of the nucleus. Localizes to stress granules in response to oxidative stress. A small subset localizes in mitochondria.</text>
</comment>
<comment type="domain">
    <text>The RRM domains can bind to both DNA and RNA.</text>
</comment>
<comment type="PTM">
    <text evidence="1">Hyperphosphorylated.</text>
</comment>
<comment type="PTM">
    <text evidence="1">Ubiquitinated.</text>
</comment>
<comment type="disruption phenotype">
    <text evidence="5">TARDBP depletion leads to atrophy of spinal motor neurons. Affects motor axon, neuromuscular junction and skeletal muscle.</text>
</comment>
<reference key="1">
    <citation type="journal article" date="2005" name="Science">
        <title>The transcriptional landscape of the mammalian genome.</title>
        <authorList>
            <person name="Carninci P."/>
            <person name="Kasukawa T."/>
            <person name="Katayama S."/>
            <person name="Gough J."/>
            <person name="Frith M.C."/>
            <person name="Maeda N."/>
            <person name="Oyama R."/>
            <person name="Ravasi T."/>
            <person name="Lenhard B."/>
            <person name="Wells C."/>
            <person name="Kodzius R."/>
            <person name="Shimokawa K."/>
            <person name="Bajic V.B."/>
            <person name="Brenner S.E."/>
            <person name="Batalov S."/>
            <person name="Forrest A.R."/>
            <person name="Zavolan M."/>
            <person name="Davis M.J."/>
            <person name="Wilming L.G."/>
            <person name="Aidinis V."/>
            <person name="Allen J.E."/>
            <person name="Ambesi-Impiombato A."/>
            <person name="Apweiler R."/>
            <person name="Aturaliya R.N."/>
            <person name="Bailey T.L."/>
            <person name="Bansal M."/>
            <person name="Baxter L."/>
            <person name="Beisel K.W."/>
            <person name="Bersano T."/>
            <person name="Bono H."/>
            <person name="Chalk A.M."/>
            <person name="Chiu K.P."/>
            <person name="Choudhary V."/>
            <person name="Christoffels A."/>
            <person name="Clutterbuck D.R."/>
            <person name="Crowe M.L."/>
            <person name="Dalla E."/>
            <person name="Dalrymple B.P."/>
            <person name="de Bono B."/>
            <person name="Della Gatta G."/>
            <person name="di Bernardo D."/>
            <person name="Down T."/>
            <person name="Engstrom P."/>
            <person name="Fagiolini M."/>
            <person name="Faulkner G."/>
            <person name="Fletcher C.F."/>
            <person name="Fukushima T."/>
            <person name="Furuno M."/>
            <person name="Futaki S."/>
            <person name="Gariboldi M."/>
            <person name="Georgii-Hemming P."/>
            <person name="Gingeras T.R."/>
            <person name="Gojobori T."/>
            <person name="Green R.E."/>
            <person name="Gustincich S."/>
            <person name="Harbers M."/>
            <person name="Hayashi Y."/>
            <person name="Hensch T.K."/>
            <person name="Hirokawa N."/>
            <person name="Hill D."/>
            <person name="Huminiecki L."/>
            <person name="Iacono M."/>
            <person name="Ikeo K."/>
            <person name="Iwama A."/>
            <person name="Ishikawa T."/>
            <person name="Jakt M."/>
            <person name="Kanapin A."/>
            <person name="Katoh M."/>
            <person name="Kawasawa Y."/>
            <person name="Kelso J."/>
            <person name="Kitamura H."/>
            <person name="Kitano H."/>
            <person name="Kollias G."/>
            <person name="Krishnan S.P."/>
            <person name="Kruger A."/>
            <person name="Kummerfeld S.K."/>
            <person name="Kurochkin I.V."/>
            <person name="Lareau L.F."/>
            <person name="Lazarevic D."/>
            <person name="Lipovich L."/>
            <person name="Liu J."/>
            <person name="Liuni S."/>
            <person name="McWilliam S."/>
            <person name="Madan Babu M."/>
            <person name="Madera M."/>
            <person name="Marchionni L."/>
            <person name="Matsuda H."/>
            <person name="Matsuzawa S."/>
            <person name="Miki H."/>
            <person name="Mignone F."/>
            <person name="Miyake S."/>
            <person name="Morris K."/>
            <person name="Mottagui-Tabar S."/>
            <person name="Mulder N."/>
            <person name="Nakano N."/>
            <person name="Nakauchi H."/>
            <person name="Ng P."/>
            <person name="Nilsson R."/>
            <person name="Nishiguchi S."/>
            <person name="Nishikawa S."/>
            <person name="Nori F."/>
            <person name="Ohara O."/>
            <person name="Okazaki Y."/>
            <person name="Orlando V."/>
            <person name="Pang K.C."/>
            <person name="Pavan W.J."/>
            <person name="Pavesi G."/>
            <person name="Pesole G."/>
            <person name="Petrovsky N."/>
            <person name="Piazza S."/>
            <person name="Reed J."/>
            <person name="Reid J.F."/>
            <person name="Ring B.Z."/>
            <person name="Ringwald M."/>
            <person name="Rost B."/>
            <person name="Ruan Y."/>
            <person name="Salzberg S.L."/>
            <person name="Sandelin A."/>
            <person name="Schneider C."/>
            <person name="Schoenbach C."/>
            <person name="Sekiguchi K."/>
            <person name="Semple C.A."/>
            <person name="Seno S."/>
            <person name="Sessa L."/>
            <person name="Sheng Y."/>
            <person name="Shibata Y."/>
            <person name="Shimada H."/>
            <person name="Shimada K."/>
            <person name="Silva D."/>
            <person name="Sinclair B."/>
            <person name="Sperling S."/>
            <person name="Stupka E."/>
            <person name="Sugiura K."/>
            <person name="Sultana R."/>
            <person name="Takenaka Y."/>
            <person name="Taki K."/>
            <person name="Tammoja K."/>
            <person name="Tan S.L."/>
            <person name="Tang S."/>
            <person name="Taylor M.S."/>
            <person name="Tegner J."/>
            <person name="Teichmann S.A."/>
            <person name="Ueda H.R."/>
            <person name="van Nimwegen E."/>
            <person name="Verardo R."/>
            <person name="Wei C.L."/>
            <person name="Yagi K."/>
            <person name="Yamanishi H."/>
            <person name="Zabarovsky E."/>
            <person name="Zhu S."/>
            <person name="Zimmer A."/>
            <person name="Hide W."/>
            <person name="Bult C."/>
            <person name="Grimmond S.M."/>
            <person name="Teasdale R.D."/>
            <person name="Liu E.T."/>
            <person name="Brusic V."/>
            <person name="Quackenbush J."/>
            <person name="Wahlestedt C."/>
            <person name="Mattick J.S."/>
            <person name="Hume D.A."/>
            <person name="Kai C."/>
            <person name="Sasaki D."/>
            <person name="Tomaru Y."/>
            <person name="Fukuda S."/>
            <person name="Kanamori-Katayama M."/>
            <person name="Suzuki M."/>
            <person name="Aoki J."/>
            <person name="Arakawa T."/>
            <person name="Iida J."/>
            <person name="Imamura K."/>
            <person name="Itoh M."/>
            <person name="Kato T."/>
            <person name="Kawaji H."/>
            <person name="Kawagashira N."/>
            <person name="Kawashima T."/>
            <person name="Kojima M."/>
            <person name="Kondo S."/>
            <person name="Konno H."/>
            <person name="Nakano K."/>
            <person name="Ninomiya N."/>
            <person name="Nishio T."/>
            <person name="Okada M."/>
            <person name="Plessy C."/>
            <person name="Shibata K."/>
            <person name="Shiraki T."/>
            <person name="Suzuki S."/>
            <person name="Tagami M."/>
            <person name="Waki K."/>
            <person name="Watahiki A."/>
            <person name="Okamura-Oho Y."/>
            <person name="Suzuki H."/>
            <person name="Kawai J."/>
            <person name="Hayashizaki Y."/>
        </authorList>
    </citation>
    <scope>NUCLEOTIDE SEQUENCE [LARGE SCALE MRNA]</scope>
    <source>
        <strain>C57BL/6J</strain>
        <tissue>Testis</tissue>
        <tissue>Thymus</tissue>
    </source>
</reference>
<reference key="2">
    <citation type="journal article" date="2004" name="Genome Res.">
        <title>The status, quality, and expansion of the NIH full-length cDNA project: the Mammalian Gene Collection (MGC).</title>
        <authorList>
            <consortium name="The MGC Project Team"/>
        </authorList>
    </citation>
    <scope>NUCLEOTIDE SEQUENCE [LARGE SCALE MRNA]</scope>
    <source>
        <strain>FVB/N</strain>
        <tissue>Mammary gland</tissue>
    </source>
</reference>
<reference key="3">
    <citation type="submission" date="2007-03" db="UniProtKB">
        <authorList>
            <person name="Lubec G."/>
            <person name="Klug S."/>
        </authorList>
    </citation>
    <scope>PROTEIN SEQUENCE OF 276-293</scope>
    <scope>IDENTIFICATION BY MASS SPECTROMETRY</scope>
    <source>
        <tissue>Hippocampus</tissue>
    </source>
</reference>
<reference key="4">
    <citation type="journal article" date="2010" name="Cell">
        <title>A tissue-specific atlas of mouse protein phosphorylation and expression.</title>
        <authorList>
            <person name="Huttlin E.L."/>
            <person name="Jedrychowski M.P."/>
            <person name="Elias J.E."/>
            <person name="Goswami T."/>
            <person name="Rad R."/>
            <person name="Beausoleil S.A."/>
            <person name="Villen J."/>
            <person name="Haas W."/>
            <person name="Sowa M.E."/>
            <person name="Gygi S.P."/>
        </authorList>
    </citation>
    <scope>PHOSPHORYLATION [LARGE SCALE ANALYSIS] AT SER-183</scope>
    <scope>IDENTIFICATION BY MASS SPECTROMETRY [LARGE SCALE ANALYSIS]</scope>
    <source>
        <tissue>Brain</tissue>
        <tissue>Brown adipose tissue</tissue>
        <tissue>Heart</tissue>
        <tissue>Kidney</tissue>
        <tissue>Liver</tissue>
        <tissue>Lung</tissue>
        <tissue>Pancreas</tissue>
        <tissue>Spleen</tissue>
        <tissue>Testis</tissue>
    </source>
</reference>
<reference key="5">
    <citation type="journal article" date="2012" name="Nucleic Acids Res.">
        <title>The testis-specific double bromodomain-containing protein BRDT forms a complex with multiple spliceosome components and is required for mRNA splicing and 3'-UTR truncation in round spermatids.</title>
        <authorList>
            <person name="Berkovits B.D."/>
            <person name="Wang L."/>
            <person name="Guarnieri P."/>
            <person name="Wolgemuth D.J."/>
        </authorList>
    </citation>
    <scope>INTERACTION WITH BRDT</scope>
</reference>
<reference key="6">
    <citation type="journal article" date="2013" name="Brain">
        <title>Loss of TDP-43 causes age-dependent progressive motor neuron degeneration.</title>
        <authorList>
            <person name="Iguchi Y."/>
            <person name="Katsuno M."/>
            <person name="Niwa J."/>
            <person name="Takagi S."/>
            <person name="Ishigaki S."/>
            <person name="Ikenaka K."/>
            <person name="Kawai K."/>
            <person name="Watanabe H."/>
            <person name="Yamanaka K."/>
            <person name="Takahashi R."/>
            <person name="Misawa H."/>
            <person name="Sasaki S."/>
            <person name="Tanaka F."/>
            <person name="Sobue G."/>
        </authorList>
    </citation>
    <scope>DISRUPTION PHENOTYPE</scope>
</reference>
<reference key="7">
    <citation type="journal article" date="2014" name="Mol. Cell. Proteomics">
        <title>Immunoaffinity enrichment and mass spectrometry analysis of protein methylation.</title>
        <authorList>
            <person name="Guo A."/>
            <person name="Gu H."/>
            <person name="Zhou J."/>
            <person name="Mulhern D."/>
            <person name="Wang Y."/>
            <person name="Lee K.A."/>
            <person name="Yang V."/>
            <person name="Aguiar M."/>
            <person name="Kornhauser J."/>
            <person name="Jia X."/>
            <person name="Ren J."/>
            <person name="Beausoleil S.A."/>
            <person name="Silva J.C."/>
            <person name="Vemulapalli V."/>
            <person name="Bedford M.T."/>
            <person name="Comb M.J."/>
        </authorList>
    </citation>
    <scope>METHYLATION [LARGE SCALE ANALYSIS] AT ARG-293</scope>
    <scope>IDENTIFICATION BY MASS SPECTROMETRY [LARGE SCALE ANALYSIS]</scope>
    <source>
        <tissue>Brain</tissue>
        <tissue>Embryo</tissue>
    </source>
</reference>
<reference key="8">
    <citation type="journal article" date="2015" name="Brain">
        <title>Peptidylprolyl isomerase A governs TARDBP function and assembly in heterogeneous nuclear ribonucleoprotein complexes.</title>
        <authorList>
            <person name="Lauranzano E."/>
            <person name="Pozzi S."/>
            <person name="Pasetto L."/>
            <person name="Stucchi R."/>
            <person name="Massignan T."/>
            <person name="Paolella K."/>
            <person name="Mombrini M."/>
            <person name="Nardo G."/>
            <person name="Lunetta C."/>
            <person name="Corbo M."/>
            <person name="Mora G."/>
            <person name="Bendotti C."/>
            <person name="Bonetto V."/>
        </authorList>
    </citation>
    <scope>FUNCTION</scope>
    <scope>INTERACTION WITH PPIA</scope>
</reference>
<reference key="9">
    <citation type="journal article" date="2016" name="PLoS ONE">
        <title>USP7 and TDP-43: pleiotropic regulation of cryptochrome protein stability paces the oscillation of the mammalian circadian clock.</title>
        <authorList>
            <person name="Hirano A."/>
            <person name="Nakagawa T."/>
            <person name="Yoshitane H."/>
            <person name="Oyama M."/>
            <person name="Kozuka-Hata H."/>
            <person name="Lanjakornsiripan D."/>
            <person name="Fukada Y."/>
        </authorList>
    </citation>
    <scope>FUNCTION</scope>
    <scope>INTERACTION WITH CRY2</scope>
</reference>
<reference key="10">
    <citation type="journal article" date="2017" name="Elife">
        <title>Suppression of C9orf72 RNA repeat-induced neurotoxicity by the ALS-associated RNA-binding protein Zfp106.</title>
        <authorList>
            <person name="Celona B."/>
            <person name="Dollen J.V."/>
            <person name="Vatsavayai S.C."/>
            <person name="Kashima R."/>
            <person name="Johnson J.R."/>
            <person name="Tang A.A."/>
            <person name="Hata A."/>
            <person name="Miller B.L."/>
            <person name="Huang E.J."/>
            <person name="Krogan N.J."/>
            <person name="Seeley W.W."/>
            <person name="Black B.L."/>
        </authorList>
    </citation>
    <scope>INTERACTION WITH ZNF106</scope>
    <scope>IDENTIFICATION BY MASS SPECTROMETRY</scope>
</reference>
<reference key="11">
    <citation type="journal article" date="2018" name="Nature">
        <title>TDP-43 and RNA form amyloid-like myo-granules in regenerating muscle.</title>
        <authorList>
            <person name="Vogler T.O."/>
            <person name="Wheeler J.R."/>
            <person name="Nguyen E.D."/>
            <person name="Hughes M.P."/>
            <person name="Britson K.A."/>
            <person name="Lester E."/>
            <person name="Rao B."/>
            <person name="Betta N.D."/>
            <person name="Whitney O.N."/>
            <person name="Ewachiw T.E."/>
            <person name="Gomes E."/>
            <person name="Shorter J."/>
            <person name="Lloyd T.E."/>
            <person name="Eisenberg D.S."/>
            <person name="Taylor J.P."/>
            <person name="Johnson A.M."/>
            <person name="Olwin B.B."/>
            <person name="Parker R."/>
        </authorList>
    </citation>
    <scope>FUNCTION</scope>
    <scope>SUBCELLULAR LOCATION</scope>
</reference>
<reference key="12">
    <citation type="journal article" date="2009" name="Nucleic Acids Res.">
        <title>Structural insights into TDP-43 in nucleic-acid binding and domain interactions.</title>
        <authorList>
            <person name="Kuo P.H."/>
            <person name="Doudeva L.G."/>
            <person name="Wang Y.T."/>
            <person name="Shen C.K."/>
            <person name="Yuan H.S."/>
        </authorList>
    </citation>
    <scope>X-RAY CRYSTALLOGRAPHY (1.65 ANGSTROMS) OF 192-265 IN COMPLEX WITH SINGLE-STRANDED DNA</scope>
    <scope>SUBUNIT</scope>
</reference>
<feature type="chain" id="PRO_0000081973" description="TAR DNA-binding protein 43">
    <location>
        <begin position="1"/>
        <end position="414"/>
    </location>
</feature>
<feature type="domain" description="RRM 1" evidence="2">
    <location>
        <begin position="104"/>
        <end position="200"/>
    </location>
</feature>
<feature type="domain" description="RRM 2" evidence="2">
    <location>
        <begin position="191"/>
        <end position="262"/>
    </location>
</feature>
<feature type="region of interest" description="Interaction with UBQLN2" evidence="1">
    <location>
        <begin position="216"/>
        <end position="414"/>
    </location>
</feature>
<feature type="region of interest" description="Disordered" evidence="3">
    <location>
        <begin position="261"/>
        <end position="301"/>
    </location>
</feature>
<feature type="region of interest" description="Disordered" evidence="3">
    <location>
        <begin position="341"/>
        <end position="414"/>
    </location>
</feature>
<feature type="compositionally biased region" description="Basic and acidic residues" evidence="3">
    <location>
        <begin position="261"/>
        <end position="274"/>
    </location>
</feature>
<feature type="compositionally biased region" description="Gly residues" evidence="3">
    <location>
        <begin position="275"/>
        <end position="301"/>
    </location>
</feature>
<feature type="compositionally biased region" description="Low complexity" evidence="3">
    <location>
        <begin position="342"/>
        <end position="358"/>
    </location>
</feature>
<feature type="compositionally biased region" description="Low complexity" evidence="3">
    <location>
        <begin position="368"/>
        <end position="392"/>
    </location>
</feature>
<feature type="compositionally biased region" description="Gly residues" evidence="3">
    <location>
        <begin position="393"/>
        <end position="402"/>
    </location>
</feature>
<feature type="compositionally biased region" description="Polar residues" evidence="3">
    <location>
        <begin position="405"/>
        <end position="414"/>
    </location>
</feature>
<feature type="modified residue" description="Phosphoserine" evidence="11">
    <location>
        <position position="183"/>
    </location>
</feature>
<feature type="modified residue" description="Phosphoserine" evidence="1">
    <location>
        <position position="292"/>
    </location>
</feature>
<feature type="modified residue" description="Omega-N-methylarginine" evidence="12">
    <location>
        <position position="293"/>
    </location>
</feature>
<feature type="cross-link" description="Glycyl lysine isopeptide (Lys-Gly) (interchain with G-Cter in SUMO2)" evidence="1">
    <location>
        <position position="79"/>
    </location>
</feature>
<feature type="cross-link" description="Glycyl lysine isopeptide (Lys-Gly) (interchain with G-Cter in SUMO2)" evidence="1">
    <location>
        <position position="84"/>
    </location>
</feature>
<feature type="cross-link" description="Glycyl lysine isopeptide (Lys-Gly) (interchain with G-Cter in SUMO2)" evidence="1">
    <location>
        <position position="95"/>
    </location>
</feature>
<feature type="cross-link" description="Glycyl lysine isopeptide (Lys-Gly) (interchain with G-Cter in SUMO2)" evidence="1">
    <location>
        <position position="102"/>
    </location>
</feature>
<feature type="cross-link" description="Glycyl lysine isopeptide (Lys-Gly) (interchain with G-Cter in SUMO2)" evidence="1">
    <location>
        <position position="181"/>
    </location>
</feature>
<feature type="cross-link" description="Glycyl lysine isopeptide (Lys-Gly) (interchain with G-Cter in SUMO2)" evidence="1">
    <location>
        <position position="263"/>
    </location>
</feature>
<feature type="sequence conflict" description="In Ref. 1; BAE32189." evidence="10" ref="1">
    <original>T</original>
    <variation>K</variation>
    <location>
        <position position="8"/>
    </location>
</feature>
<feature type="sequence conflict" description="In Ref. 1; BAE32189." evidence="10" ref="1">
    <original>V</original>
    <variation>G</variation>
    <location>
        <position position="96"/>
    </location>
</feature>
<feature type="sequence conflict" description="In Ref. 1; BAE21557." evidence="10" ref="1">
    <original>G</original>
    <variation>C</variation>
    <location>
        <position position="298"/>
    </location>
</feature>
<feature type="strand" evidence="13">
    <location>
        <begin position="192"/>
        <end position="197"/>
    </location>
</feature>
<feature type="helix" evidence="13">
    <location>
        <begin position="204"/>
        <end position="211"/>
    </location>
</feature>
<feature type="turn" evidence="13">
    <location>
        <begin position="212"/>
        <end position="214"/>
    </location>
</feature>
<feature type="strand" evidence="13">
    <location>
        <begin position="217"/>
        <end position="221"/>
    </location>
</feature>
<feature type="strand" evidence="13">
    <location>
        <begin position="228"/>
        <end position="235"/>
    </location>
</feature>
<feature type="helix" evidence="13">
    <location>
        <begin position="237"/>
        <end position="243"/>
    </location>
</feature>
<feature type="strand" evidence="13">
    <location>
        <begin position="247"/>
        <end position="250"/>
    </location>
</feature>
<feature type="strand" evidence="13">
    <location>
        <begin position="253"/>
        <end position="259"/>
    </location>
</feature>
<organism>
    <name type="scientific">Mus musculus</name>
    <name type="common">Mouse</name>
    <dbReference type="NCBI Taxonomy" id="10090"/>
    <lineage>
        <taxon>Eukaryota</taxon>
        <taxon>Metazoa</taxon>
        <taxon>Chordata</taxon>
        <taxon>Craniata</taxon>
        <taxon>Vertebrata</taxon>
        <taxon>Euteleostomi</taxon>
        <taxon>Mammalia</taxon>
        <taxon>Eutheria</taxon>
        <taxon>Euarchontoglires</taxon>
        <taxon>Glires</taxon>
        <taxon>Rodentia</taxon>
        <taxon>Myomorpha</taxon>
        <taxon>Muroidea</taxon>
        <taxon>Muridae</taxon>
        <taxon>Murinae</taxon>
        <taxon>Mus</taxon>
        <taxon>Mus</taxon>
    </lineage>
</organism>
<evidence type="ECO:0000250" key="1">
    <source>
        <dbReference type="UniProtKB" id="Q13148"/>
    </source>
</evidence>
<evidence type="ECO:0000255" key="2">
    <source>
        <dbReference type="PROSITE-ProRule" id="PRU00176"/>
    </source>
</evidence>
<evidence type="ECO:0000256" key="3">
    <source>
        <dbReference type="SAM" id="MobiDB-lite"/>
    </source>
</evidence>
<evidence type="ECO:0000269" key="4">
    <source>
    </source>
</evidence>
<evidence type="ECO:0000269" key="5">
    <source>
    </source>
</evidence>
<evidence type="ECO:0000269" key="6">
    <source>
    </source>
</evidence>
<evidence type="ECO:0000269" key="7">
    <source>
    </source>
</evidence>
<evidence type="ECO:0000269" key="8">
    <source>
    </source>
</evidence>
<evidence type="ECO:0000269" key="9">
    <source>
    </source>
</evidence>
<evidence type="ECO:0000305" key="10"/>
<evidence type="ECO:0007744" key="11">
    <source>
    </source>
</evidence>
<evidence type="ECO:0007744" key="12">
    <source>
    </source>
</evidence>
<evidence type="ECO:0007829" key="13">
    <source>
        <dbReference type="PDB" id="3D2W"/>
    </source>
</evidence>
<keyword id="KW-0002">3D-structure</keyword>
<keyword id="KW-0090">Biological rhythms</keyword>
<keyword id="KW-0963">Cytoplasm</keyword>
<keyword id="KW-0903">Direct protein sequencing</keyword>
<keyword id="KW-0238">DNA-binding</keyword>
<keyword id="KW-1017">Isopeptide bond</keyword>
<keyword id="KW-0488">Methylation</keyword>
<keyword id="KW-0496">Mitochondrion</keyword>
<keyword id="KW-0507">mRNA processing</keyword>
<keyword id="KW-0508">mRNA splicing</keyword>
<keyword id="KW-0539">Nucleus</keyword>
<keyword id="KW-0597">Phosphoprotein</keyword>
<keyword id="KW-1185">Reference proteome</keyword>
<keyword id="KW-0677">Repeat</keyword>
<keyword id="KW-0678">Repressor</keyword>
<keyword id="KW-0694">RNA-binding</keyword>
<keyword id="KW-0804">Transcription</keyword>
<keyword id="KW-0805">Transcription regulation</keyword>
<keyword id="KW-0832">Ubl conjugation</keyword>
<proteinExistence type="evidence at protein level"/>
<accession>Q921F2</accession>
<accession>Q3U591</accession>
<accession>Q3V0E7</accession>
<protein>
    <recommendedName>
        <fullName>TAR DNA-binding protein 43</fullName>
        <shortName>TDP-43</shortName>
    </recommendedName>
</protein>
<sequence length="414" mass="44548">MSEYIRVTEDENDEPIEIPSEDDGTVLLSTVTAQFPGACGLRYRNPVSQCMRGVRLVEGILHAPDAGWGNLVYVVNYPKDNKRKMDETDASSAVKVKRAVQKTSDLIVLGLPWKTTEQDLKDYFSTFGEVLMVQVKKDLKTGHSKGFGFVRFTEYETQVKVMSQRHMIDGRWCDCKLPNSKQSPDEPLRSRKVFVGRCTEDMTAEELQQFFCQYGEVVDVFIPKPFRAFAFVTFADDKVAQSLCGEDLIIKGISVHISNAEPKHNSNRQLERSGRFGGNPGGFGNQGGFGNSRGGGAGLGNNQGGNMGGGMNFGAFSINPAMMAAAQAALQSSWGMMGMLASQQNQSGPSGNNQSQGSMQREPNQAFGSGNNSYSGSNSGAPLGWGSASNAGSGSGFNGGFGSSMDSKSSGWGM</sequence>
<gene>
    <name type="primary">Tardbp</name>
    <name type="synonym">Tdp43</name>
</gene>
<name>TADBP_MOUSE</name>
<dbReference type="EMBL" id="AK133207">
    <property type="protein sequence ID" value="BAE21557.1"/>
    <property type="molecule type" value="mRNA"/>
</dbReference>
<dbReference type="EMBL" id="AK153803">
    <property type="protein sequence ID" value="BAE32189.1"/>
    <property type="molecule type" value="mRNA"/>
</dbReference>
<dbReference type="EMBL" id="BC012873">
    <property type="protein sequence ID" value="AAH12873.1"/>
    <property type="molecule type" value="mRNA"/>
</dbReference>
<dbReference type="EMBL" id="BC025544">
    <property type="protein sequence ID" value="AAH25544.1"/>
    <property type="molecule type" value="mRNA"/>
</dbReference>
<dbReference type="EMBL" id="BC027772">
    <property type="protein sequence ID" value="AAH27772.1"/>
    <property type="molecule type" value="mRNA"/>
</dbReference>
<dbReference type="EMBL" id="BC031126">
    <property type="protein sequence ID" value="AAH31126.1"/>
    <property type="molecule type" value="mRNA"/>
</dbReference>
<dbReference type="EMBL" id="BC033475">
    <property type="protein sequence ID" value="AAH33475.1"/>
    <property type="molecule type" value="mRNA"/>
</dbReference>
<dbReference type="CCDS" id="CCDS38971.1"/>
<dbReference type="RefSeq" id="NP_001003899.1">
    <property type="nucleotide sequence ID" value="NM_001003899.2"/>
</dbReference>
<dbReference type="RefSeq" id="NP_001008545.1">
    <property type="nucleotide sequence ID" value="NM_001008545.2"/>
</dbReference>
<dbReference type="RefSeq" id="NP_001008546.1">
    <property type="nucleotide sequence ID" value="NM_001008546.2"/>
</dbReference>
<dbReference type="RefSeq" id="NP_001292354.1">
    <property type="nucleotide sequence ID" value="NM_001305425.1"/>
</dbReference>
<dbReference type="RefSeq" id="NP_663531.1">
    <property type="nucleotide sequence ID" value="NM_145556.4"/>
</dbReference>
<dbReference type="PDB" id="3D2W">
    <property type="method" value="X-ray"/>
    <property type="resolution" value="1.65 A"/>
    <property type="chains" value="A=192-265"/>
</dbReference>
<dbReference type="PDBsum" id="3D2W"/>
<dbReference type="BMRB" id="Q921F2"/>
<dbReference type="SMR" id="Q921F2"/>
<dbReference type="BioGRID" id="231054">
    <property type="interactions" value="80"/>
</dbReference>
<dbReference type="CORUM" id="Q921F2"/>
<dbReference type="FunCoup" id="Q921F2">
    <property type="interactions" value="6271"/>
</dbReference>
<dbReference type="IntAct" id="Q921F2">
    <property type="interactions" value="16"/>
</dbReference>
<dbReference type="MINT" id="Q921F2"/>
<dbReference type="STRING" id="10090.ENSMUSP00000081142"/>
<dbReference type="ChEMBL" id="CHEMBL5465339"/>
<dbReference type="GlyGen" id="Q921F2">
    <property type="glycosylation" value="1 site, 1 O-linked glycan (1 site)"/>
</dbReference>
<dbReference type="iPTMnet" id="Q921F2"/>
<dbReference type="MetOSite" id="Q921F2"/>
<dbReference type="PhosphoSitePlus" id="Q921F2"/>
<dbReference type="SwissPalm" id="Q921F2"/>
<dbReference type="REPRODUCTION-2DPAGE" id="Q921F2"/>
<dbReference type="jPOST" id="Q921F2"/>
<dbReference type="PaxDb" id="10090-ENSMUSP00000081142"/>
<dbReference type="ProteomicsDB" id="254644"/>
<dbReference type="Pumba" id="Q921F2"/>
<dbReference type="TopDownProteomics" id="Q921F2"/>
<dbReference type="Antibodypedia" id="1854">
    <property type="antibodies" value="1017 antibodies from 46 providers"/>
</dbReference>
<dbReference type="DNASU" id="230908"/>
<dbReference type="Ensembl" id="ENSMUST00000084125.10">
    <property type="protein sequence ID" value="ENSMUSP00000081142.4"/>
    <property type="gene ID" value="ENSMUSG00000041459.16"/>
</dbReference>
<dbReference type="GeneID" id="230908"/>
<dbReference type="KEGG" id="mmu:230908"/>
<dbReference type="UCSC" id="uc008vvg.1">
    <property type="organism name" value="mouse"/>
</dbReference>
<dbReference type="AGR" id="MGI:2387629"/>
<dbReference type="CTD" id="23435"/>
<dbReference type="MGI" id="MGI:2387629">
    <property type="gene designation" value="Tardbp"/>
</dbReference>
<dbReference type="VEuPathDB" id="HostDB:ENSMUSG00000041459"/>
<dbReference type="eggNOG" id="ENOG502QPQ8">
    <property type="taxonomic scope" value="Eukaryota"/>
</dbReference>
<dbReference type="GeneTree" id="ENSGT00940000154343"/>
<dbReference type="HOGENOM" id="CLU_012062_6_1_1"/>
<dbReference type="InParanoid" id="Q921F2"/>
<dbReference type="OMA" id="WGSASNP"/>
<dbReference type="OrthoDB" id="2020831at2759"/>
<dbReference type="PhylomeDB" id="Q921F2"/>
<dbReference type="TreeFam" id="TF315657"/>
<dbReference type="BioGRID-ORCS" id="230908">
    <property type="hits" value="31 hits in 81 CRISPR screens"/>
</dbReference>
<dbReference type="ChiTaRS" id="Tardbp">
    <property type="organism name" value="mouse"/>
</dbReference>
<dbReference type="EvolutionaryTrace" id="Q921F2"/>
<dbReference type="PRO" id="PR:Q921F2"/>
<dbReference type="Proteomes" id="UP000000589">
    <property type="component" value="Chromosome 4"/>
</dbReference>
<dbReference type="RNAct" id="Q921F2">
    <property type="molecule type" value="protein"/>
</dbReference>
<dbReference type="Bgee" id="ENSMUSG00000041459">
    <property type="expression patterns" value="Expressed in presomitic mesoderm and 270 other cell types or tissues"/>
</dbReference>
<dbReference type="ExpressionAtlas" id="Q921F2">
    <property type="expression patterns" value="baseline and differential"/>
</dbReference>
<dbReference type="GO" id="GO:0010494">
    <property type="term" value="C:cytoplasmic stress granule"/>
    <property type="evidence" value="ECO:0007669"/>
    <property type="project" value="UniProtKB-SubCell"/>
</dbReference>
<dbReference type="GO" id="GO:0035061">
    <property type="term" value="C:interchromatin granule"/>
    <property type="evidence" value="ECO:0007669"/>
    <property type="project" value="Ensembl"/>
</dbReference>
<dbReference type="GO" id="GO:0005739">
    <property type="term" value="C:mitochondrion"/>
    <property type="evidence" value="ECO:0007669"/>
    <property type="project" value="UniProtKB-SubCell"/>
</dbReference>
<dbReference type="GO" id="GO:0016607">
    <property type="term" value="C:nuclear speck"/>
    <property type="evidence" value="ECO:0007669"/>
    <property type="project" value="Ensembl"/>
</dbReference>
<dbReference type="GO" id="GO:0005634">
    <property type="term" value="C:nucleus"/>
    <property type="evidence" value="ECO:0000314"/>
    <property type="project" value="UniProtKB"/>
</dbReference>
<dbReference type="GO" id="GO:0005726">
    <property type="term" value="C:perichromatin fibrils"/>
    <property type="evidence" value="ECO:0007669"/>
    <property type="project" value="Ensembl"/>
</dbReference>
<dbReference type="GO" id="GO:0042802">
    <property type="term" value="F:identical protein binding"/>
    <property type="evidence" value="ECO:0007669"/>
    <property type="project" value="Ensembl"/>
</dbReference>
<dbReference type="GO" id="GO:0140693">
    <property type="term" value="F:molecular condensate scaffold activity"/>
    <property type="evidence" value="ECO:0007669"/>
    <property type="project" value="Ensembl"/>
</dbReference>
<dbReference type="GO" id="GO:0003730">
    <property type="term" value="F:mRNA 3'-UTR binding"/>
    <property type="evidence" value="ECO:0007669"/>
    <property type="project" value="Ensembl"/>
</dbReference>
<dbReference type="GO" id="GO:0097157">
    <property type="term" value="F:pre-mRNA intronic binding"/>
    <property type="evidence" value="ECO:0000314"/>
    <property type="project" value="MGI"/>
</dbReference>
<dbReference type="GO" id="GO:0003723">
    <property type="term" value="F:RNA binding"/>
    <property type="evidence" value="ECO:0000314"/>
    <property type="project" value="MGI"/>
</dbReference>
<dbReference type="GO" id="GO:0000978">
    <property type="term" value="F:RNA polymerase II cis-regulatory region sequence-specific DNA binding"/>
    <property type="evidence" value="ECO:0000314"/>
    <property type="project" value="MGI"/>
</dbReference>
<dbReference type="GO" id="GO:0061158">
    <property type="term" value="P:3'-UTR-mediated mRNA destabilization"/>
    <property type="evidence" value="ECO:0007669"/>
    <property type="project" value="Ensembl"/>
</dbReference>
<dbReference type="GO" id="GO:0070935">
    <property type="term" value="P:3'-UTR-mediated mRNA stabilization"/>
    <property type="evidence" value="ECO:0007669"/>
    <property type="project" value="Ensembl"/>
</dbReference>
<dbReference type="GO" id="GO:1990000">
    <property type="term" value="P:amyloid fibril formation"/>
    <property type="evidence" value="ECO:0007669"/>
    <property type="project" value="Ensembl"/>
</dbReference>
<dbReference type="GO" id="GO:0010467">
    <property type="term" value="P:gene expression"/>
    <property type="evidence" value="ECO:0000315"/>
    <property type="project" value="MGI"/>
</dbReference>
<dbReference type="GO" id="GO:0006397">
    <property type="term" value="P:mRNA processing"/>
    <property type="evidence" value="ECO:0007669"/>
    <property type="project" value="UniProtKB-KW"/>
</dbReference>
<dbReference type="GO" id="GO:0043922">
    <property type="term" value="P:negative regulation by host of viral transcription"/>
    <property type="evidence" value="ECO:0007669"/>
    <property type="project" value="Ensembl"/>
</dbReference>
<dbReference type="GO" id="GO:0071765">
    <property type="term" value="P:nuclear inner membrane organization"/>
    <property type="evidence" value="ECO:0007669"/>
    <property type="project" value="Ensembl"/>
</dbReference>
<dbReference type="GO" id="GO:0032024">
    <property type="term" value="P:positive regulation of insulin secretion"/>
    <property type="evidence" value="ECO:0007669"/>
    <property type="project" value="Ensembl"/>
</dbReference>
<dbReference type="GO" id="GO:0042307">
    <property type="term" value="P:positive regulation of protein import into nucleus"/>
    <property type="evidence" value="ECO:0000314"/>
    <property type="project" value="UniProtKB"/>
</dbReference>
<dbReference type="GO" id="GO:0042981">
    <property type="term" value="P:regulation of apoptotic process"/>
    <property type="evidence" value="ECO:0007669"/>
    <property type="project" value="Ensembl"/>
</dbReference>
<dbReference type="GO" id="GO:0051726">
    <property type="term" value="P:regulation of cell cycle"/>
    <property type="evidence" value="ECO:0007669"/>
    <property type="project" value="Ensembl"/>
</dbReference>
<dbReference type="GO" id="GO:0042752">
    <property type="term" value="P:regulation of circadian rhythm"/>
    <property type="evidence" value="ECO:0000315"/>
    <property type="project" value="UniProtKB"/>
</dbReference>
<dbReference type="GO" id="GO:0031647">
    <property type="term" value="P:regulation of protein stability"/>
    <property type="evidence" value="ECO:0000315"/>
    <property type="project" value="UniProtKB"/>
</dbReference>
<dbReference type="GO" id="GO:0034976">
    <property type="term" value="P:response to endoplasmic reticulum stress"/>
    <property type="evidence" value="ECO:0007669"/>
    <property type="project" value="Ensembl"/>
</dbReference>
<dbReference type="GO" id="GO:0048511">
    <property type="term" value="P:rhythmic process"/>
    <property type="evidence" value="ECO:0007669"/>
    <property type="project" value="UniProtKB-KW"/>
</dbReference>
<dbReference type="GO" id="GO:0008380">
    <property type="term" value="P:RNA splicing"/>
    <property type="evidence" value="ECO:0000315"/>
    <property type="project" value="MGI"/>
</dbReference>
<dbReference type="CDD" id="cd19609">
    <property type="entry name" value="NTD_TDP-43"/>
    <property type="match status" value="1"/>
</dbReference>
<dbReference type="CDD" id="cd12321">
    <property type="entry name" value="RRM1_TDP43"/>
    <property type="match status" value="1"/>
</dbReference>
<dbReference type="CDD" id="cd12322">
    <property type="entry name" value="RRM2_TDP43"/>
    <property type="match status" value="1"/>
</dbReference>
<dbReference type="FunFam" id="3.30.70.330:FF:000098">
    <property type="entry name" value="TAR DNA-binding protein 43"/>
    <property type="match status" value="1"/>
</dbReference>
<dbReference type="FunFam" id="3.30.70.330:FF:000107">
    <property type="entry name" value="TAR DNA-binding protein 43"/>
    <property type="match status" value="1"/>
</dbReference>
<dbReference type="Gene3D" id="3.30.70.330">
    <property type="match status" value="2"/>
</dbReference>
<dbReference type="InterPro" id="IPR012677">
    <property type="entry name" value="Nucleotide-bd_a/b_plait_sf"/>
</dbReference>
<dbReference type="InterPro" id="IPR035979">
    <property type="entry name" value="RBD_domain_sf"/>
</dbReference>
<dbReference type="InterPro" id="IPR000504">
    <property type="entry name" value="RRM_dom"/>
</dbReference>
<dbReference type="InterPro" id="IPR049124">
    <property type="entry name" value="TDP-43_C"/>
</dbReference>
<dbReference type="InterPro" id="IPR041105">
    <property type="entry name" value="TDP-43_N"/>
</dbReference>
<dbReference type="PANTHER" id="PTHR48033">
    <property type="entry name" value="RNA-BINDING (RRM/RBD/RNP MOTIFS) FAMILY PROTEIN"/>
    <property type="match status" value="1"/>
</dbReference>
<dbReference type="PANTHER" id="PTHR48033:SF9">
    <property type="entry name" value="TAR DNA-BINDING PROTEIN 43"/>
    <property type="match status" value="1"/>
</dbReference>
<dbReference type="Pfam" id="PF00076">
    <property type="entry name" value="RRM_1"/>
    <property type="match status" value="2"/>
</dbReference>
<dbReference type="Pfam" id="PF20910">
    <property type="entry name" value="TDP-43_C"/>
    <property type="match status" value="1"/>
</dbReference>
<dbReference type="Pfam" id="PF18694">
    <property type="entry name" value="TDP-43_N"/>
    <property type="match status" value="1"/>
</dbReference>
<dbReference type="SMART" id="SM00360">
    <property type="entry name" value="RRM"/>
    <property type="match status" value="2"/>
</dbReference>
<dbReference type="SUPFAM" id="SSF54928">
    <property type="entry name" value="RNA-binding domain, RBD"/>
    <property type="match status" value="2"/>
</dbReference>
<dbReference type="PROSITE" id="PS50102">
    <property type="entry name" value="RRM"/>
    <property type="match status" value="2"/>
</dbReference>